<evidence type="ECO:0000255" key="1">
    <source>
        <dbReference type="HAMAP-Rule" id="MF_01053"/>
    </source>
</evidence>
<reference key="1">
    <citation type="journal article" date="2008" name="Genome Res.">
        <title>Comparative genome analysis of Salmonella enteritidis PT4 and Salmonella gallinarum 287/91 provides insights into evolutionary and host adaptation pathways.</title>
        <authorList>
            <person name="Thomson N.R."/>
            <person name="Clayton D.J."/>
            <person name="Windhorst D."/>
            <person name="Vernikos G."/>
            <person name="Davidson S."/>
            <person name="Churcher C."/>
            <person name="Quail M.A."/>
            <person name="Stevens M."/>
            <person name="Jones M.A."/>
            <person name="Watson M."/>
            <person name="Barron A."/>
            <person name="Layton A."/>
            <person name="Pickard D."/>
            <person name="Kingsley R.A."/>
            <person name="Bignell A."/>
            <person name="Clark L."/>
            <person name="Harris B."/>
            <person name="Ormond D."/>
            <person name="Abdellah Z."/>
            <person name="Brooks K."/>
            <person name="Cherevach I."/>
            <person name="Chillingworth T."/>
            <person name="Woodward J."/>
            <person name="Norberczak H."/>
            <person name="Lord A."/>
            <person name="Arrowsmith C."/>
            <person name="Jagels K."/>
            <person name="Moule S."/>
            <person name="Mungall K."/>
            <person name="Saunders M."/>
            <person name="Whitehead S."/>
            <person name="Chabalgoity J.A."/>
            <person name="Maskell D."/>
            <person name="Humphreys T."/>
            <person name="Roberts M."/>
            <person name="Barrow P.A."/>
            <person name="Dougan G."/>
            <person name="Parkhill J."/>
        </authorList>
    </citation>
    <scope>NUCLEOTIDE SEQUENCE [LARGE SCALE GENOMIC DNA]</scope>
    <source>
        <strain>P125109</strain>
    </source>
</reference>
<name>YACL_SALEP</name>
<dbReference type="EMBL" id="AM933172">
    <property type="protein sequence ID" value="CAR31753.1"/>
    <property type="molecule type" value="Genomic_DNA"/>
</dbReference>
<dbReference type="RefSeq" id="WP_000384308.1">
    <property type="nucleotide sequence ID" value="NC_011294.1"/>
</dbReference>
<dbReference type="SMR" id="B5R2Q9"/>
<dbReference type="KEGG" id="set:SEN0165"/>
<dbReference type="HOGENOM" id="CLU_139226_0_0_6"/>
<dbReference type="Proteomes" id="UP000000613">
    <property type="component" value="Chromosome"/>
</dbReference>
<dbReference type="HAMAP" id="MF_01053">
    <property type="entry name" value="UPF0231"/>
    <property type="match status" value="1"/>
</dbReference>
<dbReference type="InterPro" id="IPR008249">
    <property type="entry name" value="UPF0231"/>
</dbReference>
<dbReference type="NCBIfam" id="NF003574">
    <property type="entry name" value="PRK05248.1-1"/>
    <property type="match status" value="1"/>
</dbReference>
<dbReference type="NCBIfam" id="NF003576">
    <property type="entry name" value="PRK05248.1-3"/>
    <property type="match status" value="1"/>
</dbReference>
<dbReference type="Pfam" id="PF06062">
    <property type="entry name" value="UPF0231"/>
    <property type="match status" value="1"/>
</dbReference>
<dbReference type="PIRSF" id="PIRSF006287">
    <property type="entry name" value="UCP006287"/>
    <property type="match status" value="1"/>
</dbReference>
<proteinExistence type="inferred from homology"/>
<gene>
    <name evidence="1" type="primary">yacL</name>
    <name type="ordered locus">SEN0165</name>
</gene>
<comment type="similarity">
    <text evidence="1">Belongs to the UPF0231 family.</text>
</comment>
<sequence length="120" mass="13888">MDYEFLRDVTGGVKVRMSMGHEVVGHWFNEEVKDNLSLLDEVEQAARTVKGSERSWQRAGHEYTIWMDGEEVMIRANQLDFSGDEMEEGMSYYDEESLSLCGMEDFLRVVAAYREFVSKA</sequence>
<accession>B5R2Q9</accession>
<feature type="chain" id="PRO_1000136303" description="UPF0231 protein YacL">
    <location>
        <begin position="1"/>
        <end position="120"/>
    </location>
</feature>
<protein>
    <recommendedName>
        <fullName evidence="1">UPF0231 protein YacL</fullName>
    </recommendedName>
</protein>
<organism>
    <name type="scientific">Salmonella enteritidis PT4 (strain P125109)</name>
    <dbReference type="NCBI Taxonomy" id="550537"/>
    <lineage>
        <taxon>Bacteria</taxon>
        <taxon>Pseudomonadati</taxon>
        <taxon>Pseudomonadota</taxon>
        <taxon>Gammaproteobacteria</taxon>
        <taxon>Enterobacterales</taxon>
        <taxon>Enterobacteriaceae</taxon>
        <taxon>Salmonella</taxon>
    </lineage>
</organism>